<sequence length="1486" mass="170176">MIERGKFRSLTLINWNGFFARTFDLDELVTTLSGGNGAGKSTTMAAFVTALIPDLTLLHFRNTTEAGATSGSRDKGLHGKLKAGVCYSMLDTINSRHQRVVVGVRLQQVAGRDRKVDIKPFAIQGLPMSVQPTQLVTETLNERQARVLPLNELKDKLEAMEGVQFKQFNSITDYHSLMFDLGIIARRLRSASDRSKFYRLIEASLYGGISSAITRSLRDYLLPENSGVRKAFQDMEAALRENRMTLEAIRVTQSDRDLFKHLISEATNYVAADYMRHANERRVHLDKALEFRRELHTSRQQLAAEQYKHVDMARELAEHNGAEGDLEADYQAASDHLNLVQTALRQQEKIERYEADLDELQIRLEEQNEVVAEAIERQEENEARAEAAELEVDELKSQLADYQQALDVQQTRAIQYNQAIAALNRAKELCHLPDLTADSAAEWLETFQAKELEATEKMLSLEQKMSMAQTAHSQFEQAYQLVVAINGPLARNEAWDVARELLREGVDQRHLAEQVQPLRMRLSELEQRLREQQEAERLLADFCKRQGKNFDIDELEALHQELEARIASLSDSVSNAREERMALRQEQEQLQSRIQSLMQRAPVWLAAQNSLNQLSEQCGEEFTSSQDVTEYLQQLLEREREAIVERDEVGARKNAVDEEIERLSQPGGSEDQRLNALAERFGGVLLSEIYDDVSLEDAPYFSALYGPSRHAIVVPDLSQVTEHLDGLTDCPEDLYLIEGDPQSFDDSVFSVDELEKAVVVKIADRQWRYSRFPEVPLFGRAARESRIESLHAEREVLSERFATLSFDVQKTQRLHQAFSRFIGSHLAVVFESDPEAEIRQLNSRRVELERALSNHENDNQQQRIQFEQAKEGVTALNRILPRLNLLADDSLADRVDEIRERLDEAQEAARFVQQFGNQLAKLEPIVSVLQSDPEQFEQLKEDYAYSQQMQRDARQQAFALTEVVQRRAHFSYSDSAEMLSGNSDLNEKLRERLEQAEAERTRAREALRGHAAQLSQYNQVLASLKSSYDTKKELLNDLQRELQDIGVCADSGAEERARIRRDELHAQLSNNRSRRNQLEKALTFCEAEMDNLTRKLRKLERDYFEMREQVVTAKAGWCAVMRMVKDNGVERRLHRRELAYLSADDLRSMSDKALGALRLAVADNEHLRDVLRMSEDPKRPERKIQFFVAAYQHLRERIRQDIIRTDDPVEAIEQMEIELSRLTEELTSREQKLVISSRSVANIIRKTIQREQNRIRMLNQGLQNVSFGQVNSVRLNVNVRETHAMLLDVLSEQHEQHQDLFNSNRLTFSEALAKLYQRLNPQIDMGQRTPQTIGEELLDYRNYLEMEVEVNRGSDGWLRAESGALSTGEAIGTGMSILVMVVQSWEDESRRLRGKDISPCRLLFLDEAARLDARSIATLFELCERLQMQLIIAAPENISPEKGTTYKLVRKVFQNTEHVHVVGLRGFAPQLPETLPGTDEAPSQAS</sequence>
<name>MUKB_SHIBS</name>
<gene>
    <name evidence="1" type="primary">mukB</name>
    <name type="ordered locus">SBO_2212</name>
</gene>
<keyword id="KW-0067">ATP-binding</keyword>
<keyword id="KW-0131">Cell cycle</keyword>
<keyword id="KW-0132">Cell division</keyword>
<keyword id="KW-0159">Chromosome partition</keyword>
<keyword id="KW-0175">Coiled coil</keyword>
<keyword id="KW-0963">Cytoplasm</keyword>
<keyword id="KW-0226">DNA condensation</keyword>
<keyword id="KW-0238">DNA-binding</keyword>
<keyword id="KW-0547">Nucleotide-binding</keyword>
<accession>Q31YS6</accession>
<protein>
    <recommendedName>
        <fullName evidence="1">Chromosome partition protein MukB</fullName>
    </recommendedName>
    <alternativeName>
        <fullName evidence="1">Structural maintenance of chromosome-related protein</fullName>
    </alternativeName>
</protein>
<evidence type="ECO:0000255" key="1">
    <source>
        <dbReference type="HAMAP-Rule" id="MF_01800"/>
    </source>
</evidence>
<feature type="chain" id="PRO_1000069912" description="Chromosome partition protein MukB">
    <location>
        <begin position="1"/>
        <end position="1486"/>
    </location>
</feature>
<feature type="region of interest" description="Flexible hinge" evidence="1">
    <location>
        <begin position="666"/>
        <end position="783"/>
    </location>
</feature>
<feature type="coiled-coil region" evidence="1">
    <location>
        <begin position="326"/>
        <end position="418"/>
    </location>
</feature>
<feature type="coiled-coil region" evidence="1">
    <location>
        <begin position="444"/>
        <end position="480"/>
    </location>
</feature>
<feature type="coiled-coil region" evidence="1">
    <location>
        <begin position="509"/>
        <end position="603"/>
    </location>
</feature>
<feature type="coiled-coil region" evidence="1">
    <location>
        <begin position="835"/>
        <end position="923"/>
    </location>
</feature>
<feature type="coiled-coil region" evidence="1">
    <location>
        <begin position="977"/>
        <end position="1115"/>
    </location>
</feature>
<feature type="coiled-coil region" evidence="1">
    <location>
        <begin position="1209"/>
        <end position="1266"/>
    </location>
</feature>
<feature type="binding site" evidence="1">
    <location>
        <begin position="34"/>
        <end position="41"/>
    </location>
    <ligand>
        <name>ATP</name>
        <dbReference type="ChEBI" id="CHEBI:30616"/>
    </ligand>
</feature>
<comment type="function">
    <text evidence="1">Plays a central role in chromosome condensation, segregation and cell cycle progression. Functions as a homodimer, which is essential for chromosome partition. Involved in negative DNA supercoiling in vivo, and by this means organize and compact chromosomes. May achieve or facilitate chromosome segregation by condensation DNA from both sides of a centrally located replisome during cell division.</text>
</comment>
<comment type="subunit">
    <text evidence="1">Homodimerization via its hinge domain. Binds to DNA via its C-terminal region. Interacts, and probably forms a ternary complex, with MukE and MukF via its C-terminal region. The complex formation is stimulated by calcium or magnesium. Interacts with tubulin-related protein FtsZ.</text>
</comment>
<comment type="subcellular location">
    <subcellularLocation>
        <location evidence="1">Cytoplasm</location>
        <location evidence="1">Nucleoid</location>
    </subcellularLocation>
    <text evidence="1">Restricted to the nucleoid region.</text>
</comment>
<comment type="domain">
    <text evidence="1">The hinge domain, which separates the large intramolecular coiled coil regions, allows the homodimerization, forming a V-shaped homodimer.</text>
</comment>
<comment type="similarity">
    <text evidence="1">Belongs to the SMC family. MukB subfamily.</text>
</comment>
<dbReference type="EMBL" id="CP000036">
    <property type="protein sequence ID" value="ABB66782.1"/>
    <property type="molecule type" value="Genomic_DNA"/>
</dbReference>
<dbReference type="RefSeq" id="WP_000572658.1">
    <property type="nucleotide sequence ID" value="NC_007613.1"/>
</dbReference>
<dbReference type="SMR" id="Q31YS6"/>
<dbReference type="KEGG" id="sbo:SBO_2212"/>
<dbReference type="HOGENOM" id="CLU_004430_0_0_6"/>
<dbReference type="Proteomes" id="UP000007067">
    <property type="component" value="Chromosome"/>
</dbReference>
<dbReference type="GO" id="GO:0005737">
    <property type="term" value="C:cytoplasm"/>
    <property type="evidence" value="ECO:0007669"/>
    <property type="project" value="UniProtKB-UniRule"/>
</dbReference>
<dbReference type="GO" id="GO:0009295">
    <property type="term" value="C:nucleoid"/>
    <property type="evidence" value="ECO:0007669"/>
    <property type="project" value="UniProtKB-SubCell"/>
</dbReference>
<dbReference type="GO" id="GO:0005524">
    <property type="term" value="F:ATP binding"/>
    <property type="evidence" value="ECO:0007669"/>
    <property type="project" value="UniProtKB-UniRule"/>
</dbReference>
<dbReference type="GO" id="GO:0003677">
    <property type="term" value="F:DNA binding"/>
    <property type="evidence" value="ECO:0007669"/>
    <property type="project" value="UniProtKB-UniRule"/>
</dbReference>
<dbReference type="GO" id="GO:0051301">
    <property type="term" value="P:cell division"/>
    <property type="evidence" value="ECO:0007669"/>
    <property type="project" value="UniProtKB-KW"/>
</dbReference>
<dbReference type="GO" id="GO:0030261">
    <property type="term" value="P:chromosome condensation"/>
    <property type="evidence" value="ECO:0007669"/>
    <property type="project" value="UniProtKB-KW"/>
</dbReference>
<dbReference type="GO" id="GO:0007059">
    <property type="term" value="P:chromosome segregation"/>
    <property type="evidence" value="ECO:0007669"/>
    <property type="project" value="UniProtKB-UniRule"/>
</dbReference>
<dbReference type="GO" id="GO:0006260">
    <property type="term" value="P:DNA replication"/>
    <property type="evidence" value="ECO:0007669"/>
    <property type="project" value="UniProtKB-UniRule"/>
</dbReference>
<dbReference type="FunFam" id="1.20.58.850:FF:000001">
    <property type="entry name" value="Chromosome partition protein MukB"/>
    <property type="match status" value="1"/>
</dbReference>
<dbReference type="FunFam" id="3.30.70.3500:FF:000001">
    <property type="entry name" value="Chromosome partition protein MukB"/>
    <property type="match status" value="1"/>
</dbReference>
<dbReference type="FunFam" id="3.40.1140.10:FF:000001">
    <property type="entry name" value="Chromosome partition protein MukB"/>
    <property type="match status" value="1"/>
</dbReference>
<dbReference type="FunFam" id="3.40.1140.10:FF:000002">
    <property type="entry name" value="Chromosome partition protein MukB"/>
    <property type="match status" value="1"/>
</dbReference>
<dbReference type="Gene3D" id="1.10.287.1490">
    <property type="match status" value="1"/>
</dbReference>
<dbReference type="Gene3D" id="1.20.58.850">
    <property type="match status" value="1"/>
</dbReference>
<dbReference type="Gene3D" id="3.40.1140.10">
    <property type="match status" value="2"/>
</dbReference>
<dbReference type="Gene3D" id="1.20.5.420">
    <property type="entry name" value="Immunoglobulin FC, subunit C"/>
    <property type="match status" value="1"/>
</dbReference>
<dbReference type="Gene3D" id="3.30.70.3500">
    <property type="entry name" value="MukB, hinge domain"/>
    <property type="match status" value="1"/>
</dbReference>
<dbReference type="HAMAP" id="MF_01800">
    <property type="entry name" value="MukB"/>
    <property type="match status" value="1"/>
</dbReference>
<dbReference type="InterPro" id="IPR012090">
    <property type="entry name" value="MukB"/>
</dbReference>
<dbReference type="InterPro" id="IPR050308">
    <property type="entry name" value="MukB/SMC"/>
</dbReference>
<dbReference type="InterPro" id="IPR032520">
    <property type="entry name" value="MukB_hinge"/>
</dbReference>
<dbReference type="InterPro" id="IPR042501">
    <property type="entry name" value="MukB_hinge_sf"/>
</dbReference>
<dbReference type="InterPro" id="IPR007406">
    <property type="entry name" value="MukB_N_dom"/>
</dbReference>
<dbReference type="InterPro" id="IPR027417">
    <property type="entry name" value="P-loop_NTPase"/>
</dbReference>
<dbReference type="NCBIfam" id="NF003422">
    <property type="entry name" value="PRK04863.1"/>
    <property type="match status" value="1"/>
</dbReference>
<dbReference type="PANTHER" id="PTHR42963">
    <property type="entry name" value="CHROMOSOME PARTITION PROTEIN MUKB"/>
    <property type="match status" value="1"/>
</dbReference>
<dbReference type="PANTHER" id="PTHR42963:SF1">
    <property type="entry name" value="DUF4476 DOMAIN-CONTAINING PROTEIN"/>
    <property type="match status" value="1"/>
</dbReference>
<dbReference type="Pfam" id="PF04310">
    <property type="entry name" value="MukB"/>
    <property type="match status" value="1"/>
</dbReference>
<dbReference type="Pfam" id="PF16330">
    <property type="entry name" value="MukB_hinge"/>
    <property type="match status" value="1"/>
</dbReference>
<dbReference type="Pfam" id="PF13558">
    <property type="entry name" value="SbcC_Walker_B"/>
    <property type="match status" value="1"/>
</dbReference>
<dbReference type="PIRSF" id="PIRSF005246">
    <property type="entry name" value="MukB"/>
    <property type="match status" value="1"/>
</dbReference>
<dbReference type="SUPFAM" id="SSF52540">
    <property type="entry name" value="P-loop containing nucleoside triphosphate hydrolases"/>
    <property type="match status" value="2"/>
</dbReference>
<proteinExistence type="inferred from homology"/>
<organism>
    <name type="scientific">Shigella boydii serotype 4 (strain Sb227)</name>
    <dbReference type="NCBI Taxonomy" id="300268"/>
    <lineage>
        <taxon>Bacteria</taxon>
        <taxon>Pseudomonadati</taxon>
        <taxon>Pseudomonadota</taxon>
        <taxon>Gammaproteobacteria</taxon>
        <taxon>Enterobacterales</taxon>
        <taxon>Enterobacteriaceae</taxon>
        <taxon>Shigella</taxon>
    </lineage>
</organism>
<reference key="1">
    <citation type="journal article" date="2005" name="Nucleic Acids Res.">
        <title>Genome dynamics and diversity of Shigella species, the etiologic agents of bacillary dysentery.</title>
        <authorList>
            <person name="Yang F."/>
            <person name="Yang J."/>
            <person name="Zhang X."/>
            <person name="Chen L."/>
            <person name="Jiang Y."/>
            <person name="Yan Y."/>
            <person name="Tang X."/>
            <person name="Wang J."/>
            <person name="Xiong Z."/>
            <person name="Dong J."/>
            <person name="Xue Y."/>
            <person name="Zhu Y."/>
            <person name="Xu X."/>
            <person name="Sun L."/>
            <person name="Chen S."/>
            <person name="Nie H."/>
            <person name="Peng J."/>
            <person name="Xu J."/>
            <person name="Wang Y."/>
            <person name="Yuan Z."/>
            <person name="Wen Y."/>
            <person name="Yao Z."/>
            <person name="Shen Y."/>
            <person name="Qiang B."/>
            <person name="Hou Y."/>
            <person name="Yu J."/>
            <person name="Jin Q."/>
        </authorList>
    </citation>
    <scope>NUCLEOTIDE SEQUENCE [LARGE SCALE GENOMIC DNA]</scope>
    <source>
        <strain>Sb227</strain>
    </source>
</reference>